<comment type="interaction">
    <interactant intactId="EBI-10293291">
        <id>Q96S90</id>
    </interactant>
    <interactant intactId="EBI-6591081">
        <id>Q13115</id>
        <label>DUSP4</label>
    </interactant>
    <organismsDiffer>false</organismsDiffer>
    <experiments>3</experiments>
</comment>
<comment type="interaction">
    <interactant intactId="EBI-10293291">
        <id>Q96S90</id>
    </interactant>
    <interactant intactId="EBI-618309">
        <id>Q08379</id>
        <label>GOLGA2</label>
    </interactant>
    <organismsDiffer>false</organismsDiffer>
    <experiments>3</experiments>
</comment>
<comment type="interaction">
    <interactant intactId="EBI-10293291">
        <id>Q96S90</id>
    </interactant>
    <interactant intactId="EBI-5916454">
        <id>A6NEM1</id>
        <label>GOLGA6L9</label>
    </interactant>
    <organismsDiffer>false</organismsDiffer>
    <experiments>3</experiments>
</comment>
<comment type="interaction">
    <interactant intactId="EBI-10293291">
        <id>Q96S90</id>
    </interactant>
    <interactant intactId="EBI-1047093">
        <id>O76011</id>
        <label>KRT34</label>
    </interactant>
    <organismsDiffer>false</organismsDiffer>
    <experiments>3</experiments>
</comment>
<comment type="interaction">
    <interactant intactId="EBI-10293291">
        <id>Q96S90</id>
    </interactant>
    <interactant intactId="EBI-742948">
        <id>Q5JR59</id>
        <label>MTUS2</label>
    </interactant>
    <organismsDiffer>false</organismsDiffer>
    <experiments>3</experiments>
</comment>
<comment type="interaction">
    <interactant intactId="EBI-10293291">
        <id>Q96S90</id>
    </interactant>
    <interactant intactId="EBI-747278">
        <id>P26367</id>
        <label>PAX6</label>
    </interactant>
    <organismsDiffer>false</organismsDiffer>
    <experiments>3</experiments>
</comment>
<comment type="interaction">
    <interactant intactId="EBI-10293291">
        <id>Q96S90</id>
    </interactant>
    <interactant intactId="EBI-726876">
        <id>Q6NUQ1</id>
        <label>RINT1</label>
    </interactant>
    <organismsDiffer>false</organismsDiffer>
    <experiments>3</experiments>
</comment>
<comment type="interaction">
    <interactant intactId="EBI-10293291">
        <id>Q96S90</id>
    </interactant>
    <interactant intactId="EBI-722877">
        <id>Q99081</id>
        <label>TCF12</label>
    </interactant>
    <organismsDiffer>false</organismsDiffer>
    <experiments>3</experiments>
</comment>
<comment type="interaction">
    <interactant intactId="EBI-10293291">
        <id>Q96S90</id>
    </interactant>
    <interactant intactId="EBI-1105213">
        <id>Q9UBB9</id>
        <label>TFIP11</label>
    </interactant>
    <organismsDiffer>false</organismsDiffer>
    <experiments>3</experiments>
</comment>
<comment type="interaction">
    <interactant intactId="EBI-10293291">
        <id>Q96S90</id>
    </interactant>
    <interactant intactId="EBI-355744">
        <id>Q12933</id>
        <label>TRAF2</label>
    </interactant>
    <organismsDiffer>false</organismsDiffer>
    <experiments>3</experiments>
</comment>
<comment type="interaction">
    <interactant intactId="EBI-10293291">
        <id>Q96S90</id>
    </interactant>
    <interactant intactId="EBI-11525489">
        <id>Q86WT6-2</id>
        <label>TRIM69</label>
    </interactant>
    <organismsDiffer>false</organismsDiffer>
    <experiments>3</experiments>
</comment>
<comment type="alternative products">
    <event type="alternative splicing"/>
    <isoform>
        <id>Q96S90-1</id>
        <name>1</name>
        <sequence type="displayed"/>
    </isoform>
    <isoform>
        <id>Q96S90-2</id>
        <name>2</name>
        <sequence type="described" ref="VSP_041083"/>
    </isoform>
</comment>
<comment type="sequence caution" evidence="5">
    <conflict type="erroneous initiation">
        <sequence resource="EMBL-CDS" id="CAH10716"/>
    </conflict>
</comment>
<gene>
    <name type="primary">LYSMD1</name>
    <name type="ORF">SB145</name>
</gene>
<organism>
    <name type="scientific">Homo sapiens</name>
    <name type="common">Human</name>
    <dbReference type="NCBI Taxonomy" id="9606"/>
    <lineage>
        <taxon>Eukaryota</taxon>
        <taxon>Metazoa</taxon>
        <taxon>Chordata</taxon>
        <taxon>Craniata</taxon>
        <taxon>Vertebrata</taxon>
        <taxon>Euteleostomi</taxon>
        <taxon>Mammalia</taxon>
        <taxon>Eutheria</taxon>
        <taxon>Euarchontoglires</taxon>
        <taxon>Primates</taxon>
        <taxon>Haplorrhini</taxon>
        <taxon>Catarrhini</taxon>
        <taxon>Hominidae</taxon>
        <taxon>Homo</taxon>
    </lineage>
</organism>
<reference key="1">
    <citation type="submission" date="2001-05" db="EMBL/GenBank/DDBJ databases">
        <authorList>
            <person name="Li N."/>
            <person name="Zhang W."/>
            <person name="Wan T."/>
            <person name="Zhang M."/>
            <person name="Cao X."/>
        </authorList>
    </citation>
    <scope>NUCLEOTIDE SEQUENCE [LARGE SCALE MRNA] (ISOFORM 1)</scope>
</reference>
<reference key="2">
    <citation type="journal article" date="2004" name="Nat. Genet.">
        <title>Complete sequencing and characterization of 21,243 full-length human cDNAs.</title>
        <authorList>
            <person name="Ota T."/>
            <person name="Suzuki Y."/>
            <person name="Nishikawa T."/>
            <person name="Otsuki T."/>
            <person name="Sugiyama T."/>
            <person name="Irie R."/>
            <person name="Wakamatsu A."/>
            <person name="Hayashi K."/>
            <person name="Sato H."/>
            <person name="Nagai K."/>
            <person name="Kimura K."/>
            <person name="Makita H."/>
            <person name="Sekine M."/>
            <person name="Obayashi M."/>
            <person name="Nishi T."/>
            <person name="Shibahara T."/>
            <person name="Tanaka T."/>
            <person name="Ishii S."/>
            <person name="Yamamoto J."/>
            <person name="Saito K."/>
            <person name="Kawai Y."/>
            <person name="Isono Y."/>
            <person name="Nakamura Y."/>
            <person name="Nagahari K."/>
            <person name="Murakami K."/>
            <person name="Yasuda T."/>
            <person name="Iwayanagi T."/>
            <person name="Wagatsuma M."/>
            <person name="Shiratori A."/>
            <person name="Sudo H."/>
            <person name="Hosoiri T."/>
            <person name="Kaku Y."/>
            <person name="Kodaira H."/>
            <person name="Kondo H."/>
            <person name="Sugawara M."/>
            <person name="Takahashi M."/>
            <person name="Kanda K."/>
            <person name="Yokoi T."/>
            <person name="Furuya T."/>
            <person name="Kikkawa E."/>
            <person name="Omura Y."/>
            <person name="Abe K."/>
            <person name="Kamihara K."/>
            <person name="Katsuta N."/>
            <person name="Sato K."/>
            <person name="Tanikawa M."/>
            <person name="Yamazaki M."/>
            <person name="Ninomiya K."/>
            <person name="Ishibashi T."/>
            <person name="Yamashita H."/>
            <person name="Murakawa K."/>
            <person name="Fujimori K."/>
            <person name="Tanai H."/>
            <person name="Kimata M."/>
            <person name="Watanabe M."/>
            <person name="Hiraoka S."/>
            <person name="Chiba Y."/>
            <person name="Ishida S."/>
            <person name="Ono Y."/>
            <person name="Takiguchi S."/>
            <person name="Watanabe S."/>
            <person name="Yosida M."/>
            <person name="Hotuta T."/>
            <person name="Kusano J."/>
            <person name="Kanehori K."/>
            <person name="Takahashi-Fujii A."/>
            <person name="Hara H."/>
            <person name="Tanase T.-O."/>
            <person name="Nomura Y."/>
            <person name="Togiya S."/>
            <person name="Komai F."/>
            <person name="Hara R."/>
            <person name="Takeuchi K."/>
            <person name="Arita M."/>
            <person name="Imose N."/>
            <person name="Musashino K."/>
            <person name="Yuuki H."/>
            <person name="Oshima A."/>
            <person name="Sasaki N."/>
            <person name="Aotsuka S."/>
            <person name="Yoshikawa Y."/>
            <person name="Matsunawa H."/>
            <person name="Ichihara T."/>
            <person name="Shiohata N."/>
            <person name="Sano S."/>
            <person name="Moriya S."/>
            <person name="Momiyama H."/>
            <person name="Satoh N."/>
            <person name="Takami S."/>
            <person name="Terashima Y."/>
            <person name="Suzuki O."/>
            <person name="Nakagawa S."/>
            <person name="Senoh A."/>
            <person name="Mizoguchi H."/>
            <person name="Goto Y."/>
            <person name="Shimizu F."/>
            <person name="Wakebe H."/>
            <person name="Hishigaki H."/>
            <person name="Watanabe T."/>
            <person name="Sugiyama A."/>
            <person name="Takemoto M."/>
            <person name="Kawakami B."/>
            <person name="Yamazaki M."/>
            <person name="Watanabe K."/>
            <person name="Kumagai A."/>
            <person name="Itakura S."/>
            <person name="Fukuzumi Y."/>
            <person name="Fujimori Y."/>
            <person name="Komiyama M."/>
            <person name="Tashiro H."/>
            <person name="Tanigami A."/>
            <person name="Fujiwara T."/>
            <person name="Ono T."/>
            <person name="Yamada K."/>
            <person name="Fujii Y."/>
            <person name="Ozaki K."/>
            <person name="Hirao M."/>
            <person name="Ohmori Y."/>
            <person name="Kawabata A."/>
            <person name="Hikiji T."/>
            <person name="Kobatake N."/>
            <person name="Inagaki H."/>
            <person name="Ikema Y."/>
            <person name="Okamoto S."/>
            <person name="Okitani R."/>
            <person name="Kawakami T."/>
            <person name="Noguchi S."/>
            <person name="Itoh T."/>
            <person name="Shigeta K."/>
            <person name="Senba T."/>
            <person name="Matsumura K."/>
            <person name="Nakajima Y."/>
            <person name="Mizuno T."/>
            <person name="Morinaga M."/>
            <person name="Sasaki M."/>
            <person name="Togashi T."/>
            <person name="Oyama M."/>
            <person name="Hata H."/>
            <person name="Watanabe M."/>
            <person name="Komatsu T."/>
            <person name="Mizushima-Sugano J."/>
            <person name="Satoh T."/>
            <person name="Shirai Y."/>
            <person name="Takahashi Y."/>
            <person name="Nakagawa K."/>
            <person name="Okumura K."/>
            <person name="Nagase T."/>
            <person name="Nomura N."/>
            <person name="Kikuchi H."/>
            <person name="Masuho Y."/>
            <person name="Yamashita R."/>
            <person name="Nakai K."/>
            <person name="Yada T."/>
            <person name="Nakamura Y."/>
            <person name="Ohara O."/>
            <person name="Isogai T."/>
            <person name="Sugano S."/>
        </authorList>
    </citation>
    <scope>NUCLEOTIDE SEQUENCE [LARGE SCALE MRNA] (ISOFORM 2)</scope>
</reference>
<reference key="3">
    <citation type="journal article" date="2007" name="BMC Genomics">
        <title>The full-ORF clone resource of the German cDNA consortium.</title>
        <authorList>
            <person name="Bechtel S."/>
            <person name="Rosenfelder H."/>
            <person name="Duda A."/>
            <person name="Schmidt C.P."/>
            <person name="Ernst U."/>
            <person name="Wellenreuther R."/>
            <person name="Mehrle A."/>
            <person name="Schuster C."/>
            <person name="Bahr A."/>
            <person name="Bloecker H."/>
            <person name="Heubner D."/>
            <person name="Hoerlein A."/>
            <person name="Michel G."/>
            <person name="Wedler H."/>
            <person name="Koehrer K."/>
            <person name="Ottenwaelder B."/>
            <person name="Poustka A."/>
            <person name="Wiemann S."/>
            <person name="Schupp I."/>
        </authorList>
    </citation>
    <scope>NUCLEOTIDE SEQUENCE [LARGE SCALE MRNA] (ISOFORM 1)</scope>
    <source>
        <tissue>Brain</tissue>
        <tissue>Cervix</tissue>
    </source>
</reference>
<reference key="4">
    <citation type="journal article" date="2006" name="Nature">
        <title>The DNA sequence and biological annotation of human chromosome 1.</title>
        <authorList>
            <person name="Gregory S.G."/>
            <person name="Barlow K.F."/>
            <person name="McLay K.E."/>
            <person name="Kaul R."/>
            <person name="Swarbreck D."/>
            <person name="Dunham A."/>
            <person name="Scott C.E."/>
            <person name="Howe K.L."/>
            <person name="Woodfine K."/>
            <person name="Spencer C.C.A."/>
            <person name="Jones M.C."/>
            <person name="Gillson C."/>
            <person name="Searle S."/>
            <person name="Zhou Y."/>
            <person name="Kokocinski F."/>
            <person name="McDonald L."/>
            <person name="Evans R."/>
            <person name="Phillips K."/>
            <person name="Atkinson A."/>
            <person name="Cooper R."/>
            <person name="Jones C."/>
            <person name="Hall R.E."/>
            <person name="Andrews T.D."/>
            <person name="Lloyd C."/>
            <person name="Ainscough R."/>
            <person name="Almeida J.P."/>
            <person name="Ambrose K.D."/>
            <person name="Anderson F."/>
            <person name="Andrew R.W."/>
            <person name="Ashwell R.I.S."/>
            <person name="Aubin K."/>
            <person name="Babbage A.K."/>
            <person name="Bagguley C.L."/>
            <person name="Bailey J."/>
            <person name="Beasley H."/>
            <person name="Bethel G."/>
            <person name="Bird C.P."/>
            <person name="Bray-Allen S."/>
            <person name="Brown J.Y."/>
            <person name="Brown A.J."/>
            <person name="Buckley D."/>
            <person name="Burton J."/>
            <person name="Bye J."/>
            <person name="Carder C."/>
            <person name="Chapman J.C."/>
            <person name="Clark S.Y."/>
            <person name="Clarke G."/>
            <person name="Clee C."/>
            <person name="Cobley V."/>
            <person name="Collier R.E."/>
            <person name="Corby N."/>
            <person name="Coville G.J."/>
            <person name="Davies J."/>
            <person name="Deadman R."/>
            <person name="Dunn M."/>
            <person name="Earthrowl M."/>
            <person name="Ellington A.G."/>
            <person name="Errington H."/>
            <person name="Frankish A."/>
            <person name="Frankland J."/>
            <person name="French L."/>
            <person name="Garner P."/>
            <person name="Garnett J."/>
            <person name="Gay L."/>
            <person name="Ghori M.R.J."/>
            <person name="Gibson R."/>
            <person name="Gilby L.M."/>
            <person name="Gillett W."/>
            <person name="Glithero R.J."/>
            <person name="Grafham D.V."/>
            <person name="Griffiths C."/>
            <person name="Griffiths-Jones S."/>
            <person name="Grocock R."/>
            <person name="Hammond S."/>
            <person name="Harrison E.S.I."/>
            <person name="Hart E."/>
            <person name="Haugen E."/>
            <person name="Heath P.D."/>
            <person name="Holmes S."/>
            <person name="Holt K."/>
            <person name="Howden P.J."/>
            <person name="Hunt A.R."/>
            <person name="Hunt S.E."/>
            <person name="Hunter G."/>
            <person name="Isherwood J."/>
            <person name="James R."/>
            <person name="Johnson C."/>
            <person name="Johnson D."/>
            <person name="Joy A."/>
            <person name="Kay M."/>
            <person name="Kershaw J.K."/>
            <person name="Kibukawa M."/>
            <person name="Kimberley A.M."/>
            <person name="King A."/>
            <person name="Knights A.J."/>
            <person name="Lad H."/>
            <person name="Laird G."/>
            <person name="Lawlor S."/>
            <person name="Leongamornlert D.A."/>
            <person name="Lloyd D.M."/>
            <person name="Loveland J."/>
            <person name="Lovell J."/>
            <person name="Lush M.J."/>
            <person name="Lyne R."/>
            <person name="Martin S."/>
            <person name="Mashreghi-Mohammadi M."/>
            <person name="Matthews L."/>
            <person name="Matthews N.S.W."/>
            <person name="McLaren S."/>
            <person name="Milne S."/>
            <person name="Mistry S."/>
            <person name="Moore M.J.F."/>
            <person name="Nickerson T."/>
            <person name="O'Dell C.N."/>
            <person name="Oliver K."/>
            <person name="Palmeiri A."/>
            <person name="Palmer S.A."/>
            <person name="Parker A."/>
            <person name="Patel D."/>
            <person name="Pearce A.V."/>
            <person name="Peck A.I."/>
            <person name="Pelan S."/>
            <person name="Phelps K."/>
            <person name="Phillimore B.J."/>
            <person name="Plumb R."/>
            <person name="Rajan J."/>
            <person name="Raymond C."/>
            <person name="Rouse G."/>
            <person name="Saenphimmachak C."/>
            <person name="Sehra H.K."/>
            <person name="Sheridan E."/>
            <person name="Shownkeen R."/>
            <person name="Sims S."/>
            <person name="Skuce C.D."/>
            <person name="Smith M."/>
            <person name="Steward C."/>
            <person name="Subramanian S."/>
            <person name="Sycamore N."/>
            <person name="Tracey A."/>
            <person name="Tromans A."/>
            <person name="Van Helmond Z."/>
            <person name="Wall M."/>
            <person name="Wallis J.M."/>
            <person name="White S."/>
            <person name="Whitehead S.L."/>
            <person name="Wilkinson J.E."/>
            <person name="Willey D.L."/>
            <person name="Williams H."/>
            <person name="Wilming L."/>
            <person name="Wray P.W."/>
            <person name="Wu Z."/>
            <person name="Coulson A."/>
            <person name="Vaudin M."/>
            <person name="Sulston J.E."/>
            <person name="Durbin R.M."/>
            <person name="Hubbard T."/>
            <person name="Wooster R."/>
            <person name="Dunham I."/>
            <person name="Carter N.P."/>
            <person name="McVean G."/>
            <person name="Ross M.T."/>
            <person name="Harrow J."/>
            <person name="Olson M.V."/>
            <person name="Beck S."/>
            <person name="Rogers J."/>
            <person name="Bentley D.R."/>
        </authorList>
    </citation>
    <scope>NUCLEOTIDE SEQUENCE [LARGE SCALE GENOMIC DNA]</scope>
</reference>
<reference key="5">
    <citation type="journal article" date="2004" name="Genome Res.">
        <title>The status, quality, and expansion of the NIH full-length cDNA project: the Mammalian Gene Collection (MGC).</title>
        <authorList>
            <consortium name="The MGC Project Team"/>
        </authorList>
    </citation>
    <scope>NUCLEOTIDE SEQUENCE [LARGE SCALE MRNA] (ISOFORM 1)</scope>
    <source>
        <tissue>Brain</tissue>
    </source>
</reference>
<reference key="6">
    <citation type="journal article" date="2010" name="Sci. Signal.">
        <title>Quantitative phosphoproteomics reveals widespread full phosphorylation site occupancy during mitosis.</title>
        <authorList>
            <person name="Olsen J.V."/>
            <person name="Vermeulen M."/>
            <person name="Santamaria A."/>
            <person name="Kumar C."/>
            <person name="Miller M.L."/>
            <person name="Jensen L.J."/>
            <person name="Gnad F."/>
            <person name="Cox J."/>
            <person name="Jensen T.S."/>
            <person name="Nigg E.A."/>
            <person name="Brunak S."/>
            <person name="Mann M."/>
        </authorList>
    </citation>
    <scope>PHOSPHORYLATION [LARGE SCALE ANALYSIS] AT SER-99</scope>
    <scope>IDENTIFICATION BY MASS SPECTROMETRY [LARGE SCALE ANALYSIS]</scope>
    <source>
        <tissue>Cervix carcinoma</tissue>
    </source>
</reference>
<reference key="7">
    <citation type="journal article" date="2011" name="BMC Syst. Biol.">
        <title>Initial characterization of the human central proteome.</title>
        <authorList>
            <person name="Burkard T.R."/>
            <person name="Planyavsky M."/>
            <person name="Kaupe I."/>
            <person name="Breitwieser F.P."/>
            <person name="Buerckstuemmer T."/>
            <person name="Bennett K.L."/>
            <person name="Superti-Furga G."/>
            <person name="Colinge J."/>
        </authorList>
    </citation>
    <scope>IDENTIFICATION BY MASS SPECTROMETRY [LARGE SCALE ANALYSIS]</scope>
</reference>
<reference key="8">
    <citation type="journal article" date="2011" name="Sci. Signal.">
        <title>System-wide temporal characterization of the proteome and phosphoproteome of human embryonic stem cell differentiation.</title>
        <authorList>
            <person name="Rigbolt K.T."/>
            <person name="Prokhorova T.A."/>
            <person name="Akimov V."/>
            <person name="Henningsen J."/>
            <person name="Johansen P.T."/>
            <person name="Kratchmarova I."/>
            <person name="Kassem M."/>
            <person name="Mann M."/>
            <person name="Olsen J.V."/>
            <person name="Blagoev B."/>
        </authorList>
    </citation>
    <scope>PHOSPHORYLATION [LARGE SCALE ANALYSIS] AT SER-99</scope>
    <scope>IDENTIFICATION BY MASS SPECTROMETRY [LARGE SCALE ANALYSIS]</scope>
</reference>
<reference key="9">
    <citation type="journal article" date="2013" name="J. Proteome Res.">
        <title>Toward a comprehensive characterization of a human cancer cell phosphoproteome.</title>
        <authorList>
            <person name="Zhou H."/>
            <person name="Di Palma S."/>
            <person name="Preisinger C."/>
            <person name="Peng M."/>
            <person name="Polat A.N."/>
            <person name="Heck A.J."/>
            <person name="Mohammed S."/>
        </authorList>
    </citation>
    <scope>PHOSPHORYLATION [LARGE SCALE ANALYSIS] AT SER-23; SER-33; SER-99; SER-166 AND SER-212</scope>
    <scope>IDENTIFICATION BY MASS SPECTROMETRY [LARGE SCALE ANALYSIS]</scope>
    <source>
        <tissue>Cervix carcinoma</tissue>
        <tissue>Erythroleukemia</tissue>
    </source>
</reference>
<reference key="10">
    <citation type="submission" date="2006-10" db="PDB data bank">
        <title>The solution structure of the LYSM domain of human hypothetical protein SB145.</title>
        <authorList>
            <consortium name="RIKEN structural genomics initiative (RSGI)"/>
        </authorList>
    </citation>
    <scope>STRUCTURE BY NMR OF 25-95</scope>
</reference>
<name>LYSM1_HUMAN</name>
<dbReference type="EMBL" id="AY037156">
    <property type="protein sequence ID" value="AAK67635.1"/>
    <property type="molecule type" value="mRNA"/>
</dbReference>
<dbReference type="EMBL" id="AK298706">
    <property type="protein sequence ID" value="BAG60863.1"/>
    <property type="molecule type" value="mRNA"/>
</dbReference>
<dbReference type="EMBL" id="AL122088">
    <property type="protein sequence ID" value="CAH10716.1"/>
    <property type="status" value="ALT_INIT"/>
    <property type="molecule type" value="mRNA"/>
</dbReference>
<dbReference type="EMBL" id="BX647911">
    <property type="protein sequence ID" value="CAH10574.1"/>
    <property type="molecule type" value="mRNA"/>
</dbReference>
<dbReference type="EMBL" id="AL592424">
    <property type="status" value="NOT_ANNOTATED_CDS"/>
    <property type="molecule type" value="Genomic_DNA"/>
</dbReference>
<dbReference type="EMBL" id="BC031649">
    <property type="protein sequence ID" value="AAH31649.1"/>
    <property type="molecule type" value="mRNA"/>
</dbReference>
<dbReference type="CCDS" id="CCDS44218.1">
    <molecule id="Q96S90-2"/>
</dbReference>
<dbReference type="CCDS" id="CCDS986.1">
    <molecule id="Q96S90-1"/>
</dbReference>
<dbReference type="RefSeq" id="NP_001130015.1">
    <molecule id="Q96S90-2"/>
    <property type="nucleotide sequence ID" value="NM_001136543.2"/>
</dbReference>
<dbReference type="RefSeq" id="NP_997716.1">
    <molecule id="Q96S90-1"/>
    <property type="nucleotide sequence ID" value="NM_212551.5"/>
</dbReference>
<dbReference type="RefSeq" id="XP_047276061.1">
    <molecule id="Q96S90-1"/>
    <property type="nucleotide sequence ID" value="XM_047420105.1"/>
</dbReference>
<dbReference type="RefSeq" id="XP_047276068.1">
    <molecule id="Q96S90-1"/>
    <property type="nucleotide sequence ID" value="XM_047420112.1"/>
</dbReference>
<dbReference type="RefSeq" id="XP_047276071.1">
    <molecule id="Q96S90-1"/>
    <property type="nucleotide sequence ID" value="XM_047420115.1"/>
</dbReference>
<dbReference type="RefSeq" id="XP_054192501.1">
    <molecule id="Q96S90-1"/>
    <property type="nucleotide sequence ID" value="XM_054336526.1"/>
</dbReference>
<dbReference type="RefSeq" id="XP_054192502.1">
    <molecule id="Q96S90-2"/>
    <property type="nucleotide sequence ID" value="XM_054336527.1"/>
</dbReference>
<dbReference type="PDB" id="2DJP">
    <property type="method" value="NMR"/>
    <property type="chains" value="A=32-95"/>
</dbReference>
<dbReference type="PDBsum" id="2DJP"/>
<dbReference type="SMR" id="Q96S90"/>
<dbReference type="BioGRID" id="132813">
    <property type="interactions" value="13"/>
</dbReference>
<dbReference type="FunCoup" id="Q96S90">
    <property type="interactions" value="1448"/>
</dbReference>
<dbReference type="IntAct" id="Q96S90">
    <property type="interactions" value="14"/>
</dbReference>
<dbReference type="MINT" id="Q96S90"/>
<dbReference type="STRING" id="9606.ENSP00000357904"/>
<dbReference type="GlyGen" id="Q96S90">
    <property type="glycosylation" value="2 sites, 1 O-linked glycan (1 site)"/>
</dbReference>
<dbReference type="iPTMnet" id="Q96S90"/>
<dbReference type="PhosphoSitePlus" id="Q96S90"/>
<dbReference type="BioMuta" id="LYSMD1"/>
<dbReference type="DMDM" id="74752122"/>
<dbReference type="jPOST" id="Q96S90"/>
<dbReference type="MassIVE" id="Q96S90"/>
<dbReference type="PaxDb" id="9606-ENSP00000357904"/>
<dbReference type="PeptideAtlas" id="Q96S90"/>
<dbReference type="ProteomicsDB" id="78085">
    <molecule id="Q96S90-1"/>
</dbReference>
<dbReference type="ProteomicsDB" id="78086">
    <molecule id="Q96S90-2"/>
</dbReference>
<dbReference type="Pumba" id="Q96S90"/>
<dbReference type="Antibodypedia" id="34054">
    <property type="antibodies" value="108 antibodies from 18 providers"/>
</dbReference>
<dbReference type="DNASU" id="388695"/>
<dbReference type="Ensembl" id="ENST00000368908.10">
    <molecule id="Q96S90-1"/>
    <property type="protein sequence ID" value="ENSP00000357904.5"/>
    <property type="gene ID" value="ENSG00000163155.12"/>
</dbReference>
<dbReference type="Ensembl" id="ENST00000440902.2">
    <molecule id="Q96S90-2"/>
    <property type="protein sequence ID" value="ENSP00000404059.2"/>
    <property type="gene ID" value="ENSG00000163155.12"/>
</dbReference>
<dbReference type="GeneID" id="388695"/>
<dbReference type="KEGG" id="hsa:388695"/>
<dbReference type="MANE-Select" id="ENST00000368908.10">
    <property type="protein sequence ID" value="ENSP00000357904.5"/>
    <property type="RefSeq nucleotide sequence ID" value="NM_212551.5"/>
    <property type="RefSeq protein sequence ID" value="NP_997716.1"/>
</dbReference>
<dbReference type="UCSC" id="uc001ewy.4">
    <molecule id="Q96S90-1"/>
    <property type="organism name" value="human"/>
</dbReference>
<dbReference type="AGR" id="HGNC:32070"/>
<dbReference type="CTD" id="388695"/>
<dbReference type="DisGeNET" id="388695"/>
<dbReference type="GeneCards" id="LYSMD1"/>
<dbReference type="HGNC" id="HGNC:32070">
    <property type="gene designation" value="LYSMD1"/>
</dbReference>
<dbReference type="HPA" id="ENSG00000163155">
    <property type="expression patterns" value="Low tissue specificity"/>
</dbReference>
<dbReference type="neXtProt" id="NX_Q96S90"/>
<dbReference type="OpenTargets" id="ENSG00000163155"/>
<dbReference type="PharmGKB" id="PA142671493"/>
<dbReference type="VEuPathDB" id="HostDB:ENSG00000163155"/>
<dbReference type="eggNOG" id="ENOG502RZER">
    <property type="taxonomic scope" value="Eukaryota"/>
</dbReference>
<dbReference type="GeneTree" id="ENSGT00940000160002"/>
<dbReference type="HOGENOM" id="CLU_079453_0_0_1"/>
<dbReference type="InParanoid" id="Q96S90"/>
<dbReference type="OMA" id="EVWPHSA"/>
<dbReference type="OrthoDB" id="2107166at2759"/>
<dbReference type="PAN-GO" id="Q96S90">
    <property type="GO annotations" value="0 GO annotations based on evolutionary models"/>
</dbReference>
<dbReference type="PhylomeDB" id="Q96S90"/>
<dbReference type="TreeFam" id="TF318444"/>
<dbReference type="PathwayCommons" id="Q96S90"/>
<dbReference type="SignaLink" id="Q96S90"/>
<dbReference type="BioGRID-ORCS" id="388695">
    <property type="hits" value="19 hits in 1150 CRISPR screens"/>
</dbReference>
<dbReference type="ChiTaRS" id="LYSMD1">
    <property type="organism name" value="human"/>
</dbReference>
<dbReference type="EvolutionaryTrace" id="Q96S90"/>
<dbReference type="GenomeRNAi" id="388695"/>
<dbReference type="Pharos" id="Q96S90">
    <property type="development level" value="Tdark"/>
</dbReference>
<dbReference type="PRO" id="PR:Q96S90"/>
<dbReference type="Proteomes" id="UP000005640">
    <property type="component" value="Chromosome 1"/>
</dbReference>
<dbReference type="RNAct" id="Q96S90">
    <property type="molecule type" value="protein"/>
</dbReference>
<dbReference type="Bgee" id="ENSG00000163155">
    <property type="expression patterns" value="Expressed in buccal mucosa cell and 126 other cell types or tissues"/>
</dbReference>
<dbReference type="GO" id="GO:0005654">
    <property type="term" value="C:nucleoplasm"/>
    <property type="evidence" value="ECO:0000314"/>
    <property type="project" value="HPA"/>
</dbReference>
<dbReference type="CDD" id="cd00118">
    <property type="entry name" value="LysM"/>
    <property type="match status" value="1"/>
</dbReference>
<dbReference type="FunFam" id="3.10.350.10:FF:000010">
    <property type="entry name" value="LysM and putative peptidoglycan-binding domain-containing protein 1"/>
    <property type="match status" value="1"/>
</dbReference>
<dbReference type="Gene3D" id="3.10.350.10">
    <property type="entry name" value="LysM domain"/>
    <property type="match status" value="1"/>
</dbReference>
<dbReference type="InterPro" id="IPR045030">
    <property type="entry name" value="LYSM1-4"/>
</dbReference>
<dbReference type="InterPro" id="IPR018392">
    <property type="entry name" value="LysM_dom"/>
</dbReference>
<dbReference type="InterPro" id="IPR036779">
    <property type="entry name" value="LysM_dom_sf"/>
</dbReference>
<dbReference type="PANTHER" id="PTHR20932:SF2">
    <property type="entry name" value="AND PUTATIVE PEPTIDOGLYCAN-BINDING DOMAIN-CONTAINING PROTEIN 1-RELATED"/>
    <property type="match status" value="1"/>
</dbReference>
<dbReference type="PANTHER" id="PTHR20932">
    <property type="entry name" value="LYSM AND PUTATIVE PEPTIDOGLYCAN-BINDING DOMAIN-CONTAINING PROTEIN"/>
    <property type="match status" value="1"/>
</dbReference>
<dbReference type="Pfam" id="PF01476">
    <property type="entry name" value="LysM"/>
    <property type="match status" value="1"/>
</dbReference>
<dbReference type="SMART" id="SM00257">
    <property type="entry name" value="LysM"/>
    <property type="match status" value="1"/>
</dbReference>
<dbReference type="SUPFAM" id="SSF54106">
    <property type="entry name" value="LysM domain"/>
    <property type="match status" value="1"/>
</dbReference>
<dbReference type="PROSITE" id="PS51782">
    <property type="entry name" value="LYSM"/>
    <property type="match status" value="1"/>
</dbReference>
<accession>Q96S90</accession>
<accession>B4DQA1</accession>
<accession>Q69YX9</accession>
<protein>
    <recommendedName>
        <fullName>LysM and putative peptidoglycan-binding domain-containing protein 1</fullName>
    </recommendedName>
</protein>
<proteinExistence type="evidence at protein level"/>
<sequence>MASPSRQPPPGGSGLLQGSRARSYGSLVQSACSPVRERRLEHQLEPGDTLAGLALKYGVTMEQIKRANRLYTNDSIFLKKTLYIPILTEPRDLFNGLDSEEEKDGEEKVHPSNSEVWPHSTERKKQETGAGRANGEVLPTPGQETPTPIHDLSASDFLKKLDSQISLSKKAAAQKLKKGENGVPGEDAGLHLSSPWMQQRAVLGPVPLTRTSRTRTLRDQEDEIFKL</sequence>
<keyword id="KW-0002">3D-structure</keyword>
<keyword id="KW-0025">Alternative splicing</keyword>
<keyword id="KW-0597">Phosphoprotein</keyword>
<keyword id="KW-1267">Proteomics identification</keyword>
<keyword id="KW-1185">Reference proteome</keyword>
<feature type="chain" id="PRO_0000247996" description="LysM and putative peptidoglycan-binding domain-containing protein 1">
    <location>
        <begin position="1"/>
        <end position="227"/>
    </location>
</feature>
<feature type="domain" description="LysM" evidence="2">
    <location>
        <begin position="40"/>
        <end position="84"/>
    </location>
</feature>
<feature type="region of interest" description="Disordered" evidence="3">
    <location>
        <begin position="1"/>
        <end position="22"/>
    </location>
</feature>
<feature type="region of interest" description="Disordered" evidence="3">
    <location>
        <begin position="97"/>
        <end position="150"/>
    </location>
</feature>
<feature type="compositionally biased region" description="Pro residues" evidence="3">
    <location>
        <begin position="1"/>
        <end position="11"/>
    </location>
</feature>
<feature type="modified residue" description="Phosphoserine" evidence="8">
    <location>
        <position position="23"/>
    </location>
</feature>
<feature type="modified residue" description="Phosphoserine" evidence="8">
    <location>
        <position position="33"/>
    </location>
</feature>
<feature type="modified residue" description="Phosphoserine" evidence="6 7 8">
    <location>
        <position position="99"/>
    </location>
</feature>
<feature type="modified residue" description="Phosphoserine" evidence="8">
    <location>
        <position position="166"/>
    </location>
</feature>
<feature type="modified residue" description="Phosphoserine" evidence="1">
    <location>
        <position position="194"/>
    </location>
</feature>
<feature type="modified residue" description="Phosphoserine" evidence="8">
    <location>
        <position position="212"/>
    </location>
</feature>
<feature type="splice variant" id="VSP_041083" description="In isoform 2." evidence="4">
    <original>MASPSRQPPPGGSGLLQGSRARSYGSLVQSACSPVRERRLEHQLEPGDTLAGLALKYGVT</original>
    <variation>MRSGPLRISEWK</variation>
    <location>
        <begin position="1"/>
        <end position="60"/>
    </location>
</feature>
<feature type="sequence conflict" description="In Ref. 3; CAH10716." evidence="5" ref="3">
    <original>T</original>
    <variation>G</variation>
    <location>
        <position position="128"/>
    </location>
</feature>
<feature type="sequence conflict" description="In Ref. 2; BAG60863." evidence="5" ref="2">
    <original>Q</original>
    <variation>R</variation>
    <location>
        <position position="164"/>
    </location>
</feature>
<feature type="sequence conflict" description="In Ref. 3; CAH10716." evidence="5" ref="3">
    <original>Q</original>
    <variation>R</variation>
    <location>
        <position position="198"/>
    </location>
</feature>
<feature type="strand" evidence="9">
    <location>
        <begin position="37"/>
        <end position="42"/>
    </location>
</feature>
<feature type="helix" evidence="9">
    <location>
        <begin position="50"/>
        <end position="57"/>
    </location>
</feature>
<feature type="helix" evidence="9">
    <location>
        <begin position="61"/>
        <end position="67"/>
    </location>
</feature>
<feature type="helix" evidence="9">
    <location>
        <begin position="76"/>
        <end position="78"/>
    </location>
</feature>
<feature type="strand" evidence="9">
    <location>
        <begin position="82"/>
        <end position="87"/>
    </location>
</feature>
<evidence type="ECO:0000250" key="1">
    <source>
        <dbReference type="UniProtKB" id="Q9D0E3"/>
    </source>
</evidence>
<evidence type="ECO:0000255" key="2">
    <source>
        <dbReference type="PROSITE-ProRule" id="PRU01118"/>
    </source>
</evidence>
<evidence type="ECO:0000256" key="3">
    <source>
        <dbReference type="SAM" id="MobiDB-lite"/>
    </source>
</evidence>
<evidence type="ECO:0000303" key="4">
    <source>
    </source>
</evidence>
<evidence type="ECO:0000305" key="5"/>
<evidence type="ECO:0007744" key="6">
    <source>
    </source>
</evidence>
<evidence type="ECO:0007744" key="7">
    <source>
    </source>
</evidence>
<evidence type="ECO:0007744" key="8">
    <source>
    </source>
</evidence>
<evidence type="ECO:0007829" key="9">
    <source>
        <dbReference type="PDB" id="2DJP"/>
    </source>
</evidence>